<evidence type="ECO:0000250" key="1"/>
<evidence type="ECO:0000250" key="2">
    <source>
        <dbReference type="UniProtKB" id="O00327"/>
    </source>
</evidence>
<evidence type="ECO:0000250" key="3">
    <source>
        <dbReference type="UniProtKB" id="Q9WTL8"/>
    </source>
</evidence>
<evidence type="ECO:0000255" key="4">
    <source>
        <dbReference type="PROSITE-ProRule" id="PRU00140"/>
    </source>
</evidence>
<evidence type="ECO:0000255" key="5">
    <source>
        <dbReference type="PROSITE-ProRule" id="PRU00981"/>
    </source>
</evidence>
<evidence type="ECO:0000256" key="6">
    <source>
        <dbReference type="SAM" id="MobiDB-lite"/>
    </source>
</evidence>
<feature type="chain" id="PRO_0000278842" description="Basic helix-loop-helix ARNT-like protein 1">
    <location>
        <begin position="1"/>
        <end position="626"/>
    </location>
</feature>
<feature type="domain" description="bHLH" evidence="5">
    <location>
        <begin position="72"/>
        <end position="125"/>
    </location>
</feature>
<feature type="domain" description="PAS 1" evidence="4">
    <location>
        <begin position="143"/>
        <end position="215"/>
    </location>
</feature>
<feature type="domain" description="PAS 2" evidence="4">
    <location>
        <begin position="326"/>
        <end position="396"/>
    </location>
</feature>
<feature type="domain" description="PAC">
    <location>
        <begin position="401"/>
        <end position="444"/>
    </location>
</feature>
<feature type="region of interest" description="Disordered" evidence="6">
    <location>
        <begin position="1"/>
        <end position="60"/>
    </location>
</feature>
<feature type="region of interest" description="Disordered" evidence="6">
    <location>
        <begin position="457"/>
        <end position="493"/>
    </location>
</feature>
<feature type="region of interest" description="Interaction with CIART" evidence="1">
    <location>
        <begin position="508"/>
        <end position="588"/>
    </location>
</feature>
<feature type="region of interest" description="Disordered" evidence="6">
    <location>
        <begin position="510"/>
        <end position="597"/>
    </location>
</feature>
<feature type="short sequence motif" description="Nuclear localization signal" evidence="1">
    <location>
        <begin position="36"/>
        <end position="41"/>
    </location>
</feature>
<feature type="short sequence motif" description="Nuclear export signal 1" evidence="1">
    <location>
        <begin position="142"/>
        <end position="152"/>
    </location>
</feature>
<feature type="short sequence motif" description="Nuclear export signal 2" evidence="1">
    <location>
        <begin position="361"/>
        <end position="369"/>
    </location>
</feature>
<feature type="compositionally biased region" description="Basic and acidic residues" evidence="6">
    <location>
        <begin position="51"/>
        <end position="60"/>
    </location>
</feature>
<feature type="compositionally biased region" description="Gly residues" evidence="6">
    <location>
        <begin position="484"/>
        <end position="493"/>
    </location>
</feature>
<feature type="compositionally biased region" description="Low complexity" evidence="6">
    <location>
        <begin position="511"/>
        <end position="521"/>
    </location>
</feature>
<feature type="site" description="Interaction with E-box DNA" evidence="2">
    <location>
        <position position="77"/>
    </location>
</feature>
<feature type="site" description="Interaction with E-box DNA" evidence="2">
    <location>
        <position position="80"/>
    </location>
</feature>
<feature type="site" description="Interaction with E-box DNA" evidence="2">
    <location>
        <position position="81"/>
    </location>
</feature>
<feature type="site" description="Interaction with E-box DNA" evidence="2">
    <location>
        <position position="85"/>
    </location>
</feature>
<feature type="site" description="Important for interaction with CLOCK" evidence="2">
    <location>
        <position position="125"/>
    </location>
</feature>
<feature type="modified residue" description="Phosphoserine; by GSK3-beta" evidence="3">
    <location>
        <position position="17"/>
    </location>
</feature>
<feature type="modified residue" description="Phosphothreonine; by GSK3-beta" evidence="3">
    <location>
        <position position="21"/>
    </location>
</feature>
<feature type="modified residue" description="Phosphoserine" evidence="2">
    <location>
        <position position="78"/>
    </location>
</feature>
<feature type="modified residue" description="Phosphoserine; by CK2" evidence="3">
    <location>
        <position position="90"/>
    </location>
</feature>
<feature type="modified residue" description="N6-acetyllysine" evidence="3">
    <location>
        <position position="538"/>
    </location>
</feature>
<feature type="cross-link" description="Glycyl lysine isopeptide (Lys-Gly) (interchain with G-Cter in SUMO2 and SUMO3)" evidence="1">
    <location>
        <position position="252"/>
    </location>
</feature>
<feature type="cross-link" description="Glycyl lysine isopeptide (Lys-Gly) (interchain with G-Cter in SUMO); alternate" evidence="1">
    <location>
        <position position="259"/>
    </location>
</feature>
<feature type="cross-link" description="Glycyl lysine isopeptide (Lys-Gly) (interchain with G-Cter in SUMO2); alternate" evidence="2">
    <location>
        <position position="259"/>
    </location>
</feature>
<comment type="function">
    <text evidence="2 3">Transcriptional activator which forms a core component of the circadian clock. The circadian clock, an internal time-keeping system, regulates various physiological processes through the generation of approximately 24 hour circadian rhythms in gene expression, which are translated into rhythms in metabolism and behavior. It is derived from the Latin roots 'circa' (about) and 'diem' (day) and acts as an important regulator of a wide array of physiological functions including metabolism, sleep, body temperature, blood pressure, endocrine, immune, cardiovascular, and renal function. Consists of two major components: the central clock, residing in the suprachiasmatic nucleus (SCN) of the brain, and the peripheral clocks that are present in nearly every tissue and organ system. Both the central and peripheral clocks can be reset by environmental cues, also known as Zeitgebers (German for 'timegivers'). The predominant Zeitgeber for the central clock is light, which is sensed by retina and signals directly to the SCN. The central clock entrains the peripheral clocks through neuronal and hormonal signals, body temperature and feeding-related cues, aligning all clocks with the external light/dark cycle. Circadian rhythms allow an organism to achieve temporal homeostasis with its environment at the molecular level by regulating gene expression to create a peak of protein expression once every 24 hours to control when a particular physiological process is most active with respect to the solar day. Transcription and translation of core clock components (CLOCK, NPAS2, BMAL1, BMAL2, PER1, PER2, PER3, CRY1 and CRY2) plays a critical role in rhythm generation, whereas delays imposed by post-translational modifications (PTMs) are important for determining the period (tau) of the rhythms (tau refers to the period of a rhythm and is the length, in time, of one complete cycle). A diurnal rhythm is synchronized with the day/night cycle, while the ultradian and infradian rhythms have a period shorter and longer than 24 hours, respectively. Disruptions in the circadian rhythms contribute to the pathology of cardiovascular diseases, cancer, metabolic syndromes and aging. A transcription/translation feedback loop (TTFL) forms the core of the molecular circadian clock mechanism. Transcription factors, CLOCK or NPAS2 and BMAL1 or BMAL2, form the positive limb of the feedback loop, act in the form of a heterodimer and activate the transcription of core clock genes and clock-controlled genes (involved in key metabolic processes), harboring E-box elements (5'-CACGTG-3') within their promoters. The core clock genes: PER1/2/3 and CRY1/2 which are transcriptional repressors form the negative limb of the feedback loop and interact with the CLOCK|NPAS2-BMAL1|BMAL2 heterodimer inhibiting its activity and thereby negatively regulating their own expression. This heterodimer also activates nuclear receptors NR1D1, NR1D2, RORA, RORB and RORG, which form a second feedback loop and which activate and repress BMAL1 transcription, respectively. BMAL1 positively regulates myogenesis and negatively regulates adipogenesis via the transcriptional control of the genes of the canonical Wnt signaling pathway. Plays a role in normal pancreatic beta-cell function; regulates glucose-stimulated insulin secretion via the regulation of antioxidant genes NFE2L2/NRF2 and its targets SESN2, PRDX3, CCLC and CCLM. Negatively regulates the mTORC1 signaling pathway; regulates the expression of MTOR and DEPTOR. Controls diurnal oscillations of Ly6C inflammatory monocytes; rhythmic recruitment of the PRC2 complex imparts diurnal variation to chemokine expression that is necessary to sustain Ly6C monocyte rhythms. Regulates the expression of HSD3B2, STAR, PTGS2, CYP11A1, CYP19A1 and LHCGR in the ovary and also the genes involved in hair growth. Plays an important role in adult hippocampal neurogenesis by regulating the timely entry of neural stem/progenitor cells (NSPCs) into the cell cycle and the number of cell divisions that take place prior to cell-cycle exit. Regulates the circadian expression of CIART. The CLOCK-BMAL1 heterodimer regulates the circadian expression of SERPINE1/PAI1, VWF, B3, CCRN4L/NOC, NAMPT, DBP, MYOD1, PPARGC1A, PPARGC1B, SIRT1, GYS2, F7, NGFR, GNRHR, BHLHE40/DEC1, ATF4, MTA1 and also genes implicated in glucose and lipid metabolism. Promotes rhythmic chromatin opening, regulating the DNA accessibility of other transcription factors. The NPAS2-BMAL1 heterodimer positively regulates the expression of MAOA, F7 and LDHA and modulates the circadian rhythm of daytime contrast sensitivity by regulating the rhythmic expression of adenylate cyclase type 1 (ADCY1) in the retina. The preferred binding motif for the CLOCK-BMAL1 heterodimer is 5'-CACGTGA-3', which contains a flanking adenine nucleotide at the 3-prime end of the canonical 6-nucleotide E-box sequence. CLOCK specifically binds to the half-site 5'-CAC-3', while BMAL1 binds to the half-site 5'-GTGA-3'. The CLOCK-BMAL1 heterodimer also recognizes the non-canonical E-box motifs 5'-AACGTGA-3' and 5'-CATGTGA-3'. Essential for the rhythmic interaction of CLOCK with ASS1 and plays a critical role in positively regulating CLOCK-mediated acetylation of ASS1. Plays a role in protecting against lethal sepsis by limiting the expression of immune checkpoint protein CD274 in macrophages in a PKM2-dependent manner (By similarity). Regulates the diurnal rhythms of skeletal muscle metabolism via transcriptional activation of genes promoting triglyceride synthesis (DGAT2) and metabolic efficiency (COQ10B) (By similarity).</text>
</comment>
<comment type="subunit">
    <text evidence="2 3">Component of the circadian clock oscillator which includes the CRY1/2 proteins, CLOCK or NPAS2, BMAL1 or BMAL2, CSNK1D and/or CSNK1E, TIMELESS and the PER1/2/3 proteins (By similarity). Forms a heterodimer with CLOCK (By similarity). The CLOCK-BMAL1 heterodimer is required for E-box-dependent transactivation, for CLOCK nuclear translocation and degradation, and, for phosphorylation of both CLOCK and BMAL1 (By similarity). Part of a nuclear complex which also includes RACK1 and PRKCA; RACK1 and PRKCA are recruited to the complex in a circadian manner (By similarity). Interacts with NPAS2 (By similarity). Interacts with EZH2 (By similarity). Interacts with SUMO3 (By similarity). Interacts with SIRT1 (By similarity). Interacts with AHR (By similarity). Interacts with ID1, ID2 and ID3 (By similarity). Interacts with DDX4 (By similarity). Interacts with OGT (By similarity). Interacts with EED and SUZ12 (By similarity). Interacts with MTA1 (By similarity). Interacts with CIART (By similarity). Interacts with HSP90 (By similarity). Interacts with KAT2B and EP300 (By similarity). Interacts with BHLHE40/DEC1 and BHLHE41/DEC2 (By similarity). Interacts with RELB and the interaction is enhanced in the presence of CLOCK (By similarity). Interacts with PER1, PER2, CRY1 and CRY2 and this interaction requires a translocation to the nucleus (By similarity). Interaction of the CLOCK-BMAL1 heterodimer with PER or CRY inhibits transcription activation (By similarity). Interaction of the CLOCK-BMAL1 with CRY1 is independent of DNA but with PER2 is off DNA (By similarity). The CLOCK-BMAL1 heterodimer interacts with GSK3B (By similarity). Interacts with KDM5A (By similarity). Interacts with KMT2A; in a circadian manner (By similarity). Interacts with UBE3A (By similarity). Interacts with PRKCG (By similarity). Interacts with MAGEL2 (By similarity). Interacts with NCOA2 (By similarity). Interacts with THRAP3 (By similarity). The CLOCK-BMAL1 heterodimer interacts with PASD1 (By similarity). Interacts with PASD1 (By similarity). Interacts with USP9X (By similarity). Interacts with PIWIL2 (via PIWI domain) (By similarity). Interacts with HDAC3 (By similarity). Interacts with HNF4A (By similarity).</text>
</comment>
<comment type="subcellular location">
    <subcellularLocation>
        <location evidence="5">Nucleus</location>
    </subcellularLocation>
    <subcellularLocation>
        <location evidence="1">Cytoplasm</location>
    </subcellularLocation>
    <subcellularLocation>
        <location evidence="1">Nucleus</location>
        <location evidence="1">PML body</location>
    </subcellularLocation>
    <text evidence="1">Shuttles between the nucleus and the cytoplasm and this nucleocytoplasmic shuttling is essential for the nuclear accumulation of CLOCK, target gene transcription and the degradation of the CLOCK-BMAL1 heterodimer. The sumoylated form localizes in the PML body (By similarity).</text>
</comment>
<comment type="PTM">
    <text evidence="3">Ubiquitinated, leading to its proteasomal degradation. Deubiquitinated by USP9X.</text>
</comment>
<comment type="PTM">
    <text evidence="3">O-glycosylated; contains O-GlcNAc. O-glycosylation by OGT prevents protein degradation by inhibiting ubiquitination. It also stabilizes the CLOCK-BMAL1 heterodimer thereby increasing CLOCK-BMAL1-mediated transcription of genes in the negative loop of the circadian clock such as PER1/2/3 and CRY1/2 (By similarity).</text>
</comment>
<comment type="PTM">
    <text evidence="3">Acetylated on Lys-538 by CLOCK during the repression phase of the circadian cycle. Acetylation facilitates recruitment of CRY1 protein and initiates the repression phase of the circadian cycle. Acetylated at Lys-538 by KAT5 during the activation phase of the cycle, leading to recruitment of the positive transcription elongation factor b (P-TEFb) and BRD4, followed by productive elongation of circadian transcripts. Deacetylated by SIRT1, which may result in decreased protein stability.</text>
</comment>
<comment type="PTM">
    <text evidence="2 3">Phosphorylated upon dimerization with CLOCK. Phosphorylation enhances the transcriptional activity, alters the subcellular localization and decreases the stability of the CLOCK-BMAL1 heterodimer by promoting its degradation. Phosphorylation shows circadian variations in the liver with a peak between CT10 to CT14. Phosphorylation at Ser-90 by CK2 is essential for its nuclear localization, its interaction with CLOCK and controls CLOCK nuclear entry. Dephosphorylation at Ser-78 is important for dimerization with CLOCK and transcriptional activity.</text>
</comment>
<comment type="PTM">
    <text evidence="3">Sumoylated on Lys-259 upon dimerization with CLOCK. Predominantly conjugated to poly-SUMO2/3 rather than SUMO1 and the level of these conjugates undergo rhythmic variation, peaking at CT9-CT12. Sumoylation localizes it exclusively to the PML body and promotes its ubiquitination in the PML body, ubiquitin-dependent proteasomal degradation and the transcriptional activity of the CLOCK-BMAL1 heterodimer (By similarity).</text>
</comment>
<comment type="PTM">
    <text evidence="3">Undergoes lysosome-mediated degradation in a time-dependent manner in the liver.</text>
</comment>
<organism>
    <name type="scientific">Equus caballus</name>
    <name type="common">Horse</name>
    <dbReference type="NCBI Taxonomy" id="9796"/>
    <lineage>
        <taxon>Eukaryota</taxon>
        <taxon>Metazoa</taxon>
        <taxon>Chordata</taxon>
        <taxon>Craniata</taxon>
        <taxon>Vertebrata</taxon>
        <taxon>Euteleostomi</taxon>
        <taxon>Mammalia</taxon>
        <taxon>Eutheria</taxon>
        <taxon>Laurasiatheria</taxon>
        <taxon>Perissodactyla</taxon>
        <taxon>Equidae</taxon>
        <taxon>Equus</taxon>
    </lineage>
</organism>
<keyword id="KW-0007">Acetylation</keyword>
<keyword id="KW-0010">Activator</keyword>
<keyword id="KW-0090">Biological rhythms</keyword>
<keyword id="KW-0963">Cytoplasm</keyword>
<keyword id="KW-0238">DNA-binding</keyword>
<keyword id="KW-1017">Isopeptide bond</keyword>
<keyword id="KW-0539">Nucleus</keyword>
<keyword id="KW-0597">Phosphoprotein</keyword>
<keyword id="KW-1185">Reference proteome</keyword>
<keyword id="KW-0677">Repeat</keyword>
<keyword id="KW-0804">Transcription</keyword>
<keyword id="KW-0805">Transcription regulation</keyword>
<keyword id="KW-0832">Ubl conjugation</keyword>
<gene>
    <name type="primary">BMAL1</name>
    <name type="synonym">ARNTL</name>
</gene>
<reference key="1">
    <citation type="journal article" date="2006" name="J. Comp. Physiol. A">
        <title>Evidence of an oscillating peripheral clock in an equine fibroblast cell line and adipose tissue but not in peripheral blood.</title>
        <authorList>
            <person name="Murphy B.A."/>
            <person name="Vick M.M."/>
            <person name="Sessions D.R."/>
            <person name="Cook R.F."/>
            <person name="Fitzgerald B.P."/>
        </authorList>
    </citation>
    <scope>NUCLEOTIDE SEQUENCE [MRNA]</scope>
</reference>
<accession>A0MLS5</accession>
<protein>
    <recommendedName>
        <fullName>Basic helix-loop-helix ARNT-like protein 1</fullName>
    </recommendedName>
    <alternativeName>
        <fullName>Aryl hydrocarbon receptor nuclear translocator-like protein 1</fullName>
    </alternativeName>
    <alternativeName>
        <fullName>Brain and muscle ARNT-like 1</fullName>
    </alternativeName>
</protein>
<proteinExistence type="evidence at transcript level"/>
<dbReference type="EMBL" id="DQ988038">
    <property type="protein sequence ID" value="ABJ90473.1"/>
    <property type="molecule type" value="mRNA"/>
</dbReference>
<dbReference type="RefSeq" id="NP_001075390.1">
    <property type="nucleotide sequence ID" value="NM_001081921.2"/>
</dbReference>
<dbReference type="RefSeq" id="XP_014596969.1">
    <property type="nucleotide sequence ID" value="XM_014741483.1"/>
</dbReference>
<dbReference type="SMR" id="A0MLS5"/>
<dbReference type="FunCoup" id="A0MLS5">
    <property type="interactions" value="879"/>
</dbReference>
<dbReference type="STRING" id="9796.ENSECAP00000010490"/>
<dbReference type="PaxDb" id="9796-ENSECAP00000010490"/>
<dbReference type="GeneID" id="100034115"/>
<dbReference type="KEGG" id="ecb:100034115"/>
<dbReference type="CTD" id="476860"/>
<dbReference type="InParanoid" id="A0MLS5"/>
<dbReference type="OMA" id="PPTMVPD"/>
<dbReference type="OrthoDB" id="71302at2759"/>
<dbReference type="Proteomes" id="UP000002281">
    <property type="component" value="Chromosome 7"/>
</dbReference>
<dbReference type="Bgee" id="ENSECAG00000012118">
    <property type="expression patterns" value="Expressed in retina and 22 other cell types or tissues"/>
</dbReference>
<dbReference type="ExpressionAtlas" id="A0MLS5">
    <property type="expression patterns" value="baseline"/>
</dbReference>
<dbReference type="GO" id="GO:0034751">
    <property type="term" value="C:aryl hydrocarbon receptor complex"/>
    <property type="evidence" value="ECO:0000318"/>
    <property type="project" value="GO_Central"/>
</dbReference>
<dbReference type="GO" id="GO:0033391">
    <property type="term" value="C:chromatoid body"/>
    <property type="evidence" value="ECO:0000250"/>
    <property type="project" value="UniProtKB"/>
</dbReference>
<dbReference type="GO" id="GO:0005634">
    <property type="term" value="C:nucleus"/>
    <property type="evidence" value="ECO:0000250"/>
    <property type="project" value="UniProtKB"/>
</dbReference>
<dbReference type="GO" id="GO:0016605">
    <property type="term" value="C:PML body"/>
    <property type="evidence" value="ECO:0007669"/>
    <property type="project" value="UniProtKB-SubCell"/>
</dbReference>
<dbReference type="GO" id="GO:0005667">
    <property type="term" value="C:transcription regulator complex"/>
    <property type="evidence" value="ECO:0000250"/>
    <property type="project" value="UniProtKB"/>
</dbReference>
<dbReference type="GO" id="GO:0000981">
    <property type="term" value="F:DNA-binding transcription factor activity, RNA polymerase II-specific"/>
    <property type="evidence" value="ECO:0000318"/>
    <property type="project" value="GO_Central"/>
</dbReference>
<dbReference type="GO" id="GO:0070888">
    <property type="term" value="F:E-box binding"/>
    <property type="evidence" value="ECO:0000250"/>
    <property type="project" value="UniProtKB"/>
</dbReference>
<dbReference type="GO" id="GO:0046983">
    <property type="term" value="F:protein dimerization activity"/>
    <property type="evidence" value="ECO:0007669"/>
    <property type="project" value="InterPro"/>
</dbReference>
<dbReference type="GO" id="GO:0000978">
    <property type="term" value="F:RNA polymerase II cis-regulatory region sequence-specific DNA binding"/>
    <property type="evidence" value="ECO:0000250"/>
    <property type="project" value="UniProtKB"/>
</dbReference>
<dbReference type="GO" id="GO:0043565">
    <property type="term" value="F:sequence-specific DNA binding"/>
    <property type="evidence" value="ECO:0000250"/>
    <property type="project" value="UniProtKB"/>
</dbReference>
<dbReference type="GO" id="GO:0000976">
    <property type="term" value="F:transcription cis-regulatory region binding"/>
    <property type="evidence" value="ECO:0000250"/>
    <property type="project" value="UniProtKB"/>
</dbReference>
<dbReference type="GO" id="GO:0032922">
    <property type="term" value="P:circadian regulation of gene expression"/>
    <property type="evidence" value="ECO:0000250"/>
    <property type="project" value="UniProtKB"/>
</dbReference>
<dbReference type="GO" id="GO:0007623">
    <property type="term" value="P:circadian rhythm"/>
    <property type="evidence" value="ECO:0000318"/>
    <property type="project" value="GO_Central"/>
</dbReference>
<dbReference type="GO" id="GO:0045892">
    <property type="term" value="P:negative regulation of DNA-templated transcription"/>
    <property type="evidence" value="ECO:0000250"/>
    <property type="project" value="UniProtKB"/>
</dbReference>
<dbReference type="GO" id="GO:0045599">
    <property type="term" value="P:negative regulation of fat cell differentiation"/>
    <property type="evidence" value="ECO:0000250"/>
    <property type="project" value="UniProtKB"/>
</dbReference>
<dbReference type="GO" id="GO:2000323">
    <property type="term" value="P:negative regulation of nuclear receptor-mediated glucocorticoid signaling pathway"/>
    <property type="evidence" value="ECO:0000250"/>
    <property type="project" value="UniProtKB"/>
</dbReference>
<dbReference type="GO" id="GO:0032007">
    <property type="term" value="P:negative regulation of TOR signaling"/>
    <property type="evidence" value="ECO:0000250"/>
    <property type="project" value="UniProtKB"/>
</dbReference>
<dbReference type="GO" id="GO:0090403">
    <property type="term" value="P:oxidative stress-induced premature senescence"/>
    <property type="evidence" value="ECO:0000250"/>
    <property type="project" value="UniProtKB"/>
</dbReference>
<dbReference type="GO" id="GO:0090263">
    <property type="term" value="P:positive regulation of canonical Wnt signaling pathway"/>
    <property type="evidence" value="ECO:0000250"/>
    <property type="project" value="UniProtKB"/>
</dbReference>
<dbReference type="GO" id="GO:0042753">
    <property type="term" value="P:positive regulation of circadian rhythm"/>
    <property type="evidence" value="ECO:0000250"/>
    <property type="project" value="UniProtKB"/>
</dbReference>
<dbReference type="GO" id="GO:0045893">
    <property type="term" value="P:positive regulation of DNA-templated transcription"/>
    <property type="evidence" value="ECO:0000250"/>
    <property type="project" value="UniProtKB"/>
</dbReference>
<dbReference type="GO" id="GO:1901985">
    <property type="term" value="P:positive regulation of protein acetylation"/>
    <property type="evidence" value="ECO:0000250"/>
    <property type="project" value="UniProtKB"/>
</dbReference>
<dbReference type="GO" id="GO:2001016">
    <property type="term" value="P:positive regulation of skeletal muscle cell differentiation"/>
    <property type="evidence" value="ECO:0000250"/>
    <property type="project" value="UniProtKB"/>
</dbReference>
<dbReference type="GO" id="GO:0043161">
    <property type="term" value="P:proteasome-mediated ubiquitin-dependent protein catabolic process"/>
    <property type="evidence" value="ECO:0000250"/>
    <property type="project" value="UniProtKB"/>
</dbReference>
<dbReference type="GO" id="GO:0051726">
    <property type="term" value="P:regulation of cell cycle"/>
    <property type="evidence" value="ECO:0000250"/>
    <property type="project" value="UniProtKB"/>
</dbReference>
<dbReference type="GO" id="GO:2000772">
    <property type="term" value="P:regulation of cellular senescence"/>
    <property type="evidence" value="ECO:0000250"/>
    <property type="project" value="UniProtKB"/>
</dbReference>
<dbReference type="GO" id="GO:0006355">
    <property type="term" value="P:regulation of DNA-templated transcription"/>
    <property type="evidence" value="ECO:0000250"/>
    <property type="project" value="UniProtKB"/>
</dbReference>
<dbReference type="GO" id="GO:0042634">
    <property type="term" value="P:regulation of hair cycle"/>
    <property type="evidence" value="ECO:0000250"/>
    <property type="project" value="UniProtKB"/>
</dbReference>
<dbReference type="GO" id="GO:0050796">
    <property type="term" value="P:regulation of insulin secretion"/>
    <property type="evidence" value="ECO:0000250"/>
    <property type="project" value="UniProtKB"/>
</dbReference>
<dbReference type="GO" id="GO:0050767">
    <property type="term" value="P:regulation of neurogenesis"/>
    <property type="evidence" value="ECO:0000250"/>
    <property type="project" value="UniProtKB"/>
</dbReference>
<dbReference type="GO" id="GO:0006357">
    <property type="term" value="P:regulation of transcription by RNA polymerase II"/>
    <property type="evidence" value="ECO:0000318"/>
    <property type="project" value="GO_Central"/>
</dbReference>
<dbReference type="GO" id="GO:2000074">
    <property type="term" value="P:regulation of type B pancreatic cell development"/>
    <property type="evidence" value="ECO:0000250"/>
    <property type="project" value="UniProtKB"/>
</dbReference>
<dbReference type="GO" id="GO:0007283">
    <property type="term" value="P:spermatogenesis"/>
    <property type="evidence" value="ECO:0000250"/>
    <property type="project" value="UniProtKB"/>
</dbReference>
<dbReference type="CDD" id="cd11438">
    <property type="entry name" value="bHLH-PAS_ARNTL_PASD3"/>
    <property type="match status" value="1"/>
</dbReference>
<dbReference type="CDD" id="cd00130">
    <property type="entry name" value="PAS"/>
    <property type="match status" value="2"/>
</dbReference>
<dbReference type="FunFam" id="4.10.280.10:FF:000018">
    <property type="entry name" value="Aryl hydrocarbon receptor nuclear translocator-like protein 1"/>
    <property type="match status" value="1"/>
</dbReference>
<dbReference type="FunFam" id="3.30.450.20:FF:000006">
    <property type="entry name" value="aryl hydrocarbon receptor nuclear translocator-like protein 1"/>
    <property type="match status" value="1"/>
</dbReference>
<dbReference type="FunFam" id="3.30.450.20:FF:000010">
    <property type="entry name" value="Aryl hydrocarbon receptor nuclear translocator-like, isoform CRA_b"/>
    <property type="match status" value="1"/>
</dbReference>
<dbReference type="Gene3D" id="4.10.280.10">
    <property type="entry name" value="Helix-loop-helix DNA-binding domain"/>
    <property type="match status" value="1"/>
</dbReference>
<dbReference type="Gene3D" id="3.30.450.20">
    <property type="entry name" value="PAS domain"/>
    <property type="match status" value="2"/>
</dbReference>
<dbReference type="InterPro" id="IPR011598">
    <property type="entry name" value="bHLH_dom"/>
</dbReference>
<dbReference type="InterPro" id="IPR050933">
    <property type="entry name" value="Circadian_TF"/>
</dbReference>
<dbReference type="InterPro" id="IPR036638">
    <property type="entry name" value="HLH_DNA-bd_sf"/>
</dbReference>
<dbReference type="InterPro" id="IPR001067">
    <property type="entry name" value="Nuc_translocat"/>
</dbReference>
<dbReference type="InterPro" id="IPR001610">
    <property type="entry name" value="PAC"/>
</dbReference>
<dbReference type="InterPro" id="IPR000014">
    <property type="entry name" value="PAS"/>
</dbReference>
<dbReference type="InterPro" id="IPR035965">
    <property type="entry name" value="PAS-like_dom_sf"/>
</dbReference>
<dbReference type="InterPro" id="IPR013767">
    <property type="entry name" value="PAS_fold"/>
</dbReference>
<dbReference type="NCBIfam" id="TIGR00229">
    <property type="entry name" value="sensory_box"/>
    <property type="match status" value="1"/>
</dbReference>
<dbReference type="PANTHER" id="PTHR23042">
    <property type="entry name" value="CIRCADIAN PROTEIN CLOCK/ARNT/BMAL/PAS"/>
    <property type="match status" value="1"/>
</dbReference>
<dbReference type="Pfam" id="PF00010">
    <property type="entry name" value="HLH"/>
    <property type="match status" value="1"/>
</dbReference>
<dbReference type="Pfam" id="PF00989">
    <property type="entry name" value="PAS"/>
    <property type="match status" value="1"/>
</dbReference>
<dbReference type="Pfam" id="PF14598">
    <property type="entry name" value="PAS_11"/>
    <property type="match status" value="1"/>
</dbReference>
<dbReference type="PRINTS" id="PR00785">
    <property type="entry name" value="NCTRNSLOCATR"/>
</dbReference>
<dbReference type="SMART" id="SM00353">
    <property type="entry name" value="HLH"/>
    <property type="match status" value="1"/>
</dbReference>
<dbReference type="SMART" id="SM00086">
    <property type="entry name" value="PAC"/>
    <property type="match status" value="1"/>
</dbReference>
<dbReference type="SMART" id="SM00091">
    <property type="entry name" value="PAS"/>
    <property type="match status" value="2"/>
</dbReference>
<dbReference type="SUPFAM" id="SSF47459">
    <property type="entry name" value="HLH, helix-loop-helix DNA-binding domain"/>
    <property type="match status" value="1"/>
</dbReference>
<dbReference type="SUPFAM" id="SSF55785">
    <property type="entry name" value="PYP-like sensor domain (PAS domain)"/>
    <property type="match status" value="2"/>
</dbReference>
<dbReference type="PROSITE" id="PS50888">
    <property type="entry name" value="BHLH"/>
    <property type="match status" value="1"/>
</dbReference>
<dbReference type="PROSITE" id="PS50112">
    <property type="entry name" value="PAS"/>
    <property type="match status" value="2"/>
</dbReference>
<name>BMAL1_HORSE</name>
<sequence>MADQRMDISSTISDFMSPGATDLLSSPLGTSGMDCNRKRKGSSTDYQESMDTDKDDPHGRLEYTEHQGRIKNAREAHSQIEKRRRDKMNSFIDELASLVPTCNAMSRKLDKLTVLRMAVQHMKTLRGATNPYTEANYKPTFLSDDELKHLILRAADGFLFVVGCDRGKILFVSESVFKILNYSQNDLIGQSLFDYLHPKDIAKVKEQLSSSDTAPRERLIDAKTGLPVKTDITPGPSRLCSGARRSFFCRMKCNRPSVKVEDKDFPSTCSKKKADRKSFCTIHSTGYLKSWPPTKMGLDEDNEPDNEGCNLSCLVAIGRLHSHVVPQPVNGEIRVKSMEYVSRHAIDGKFVFVDQRATAILAYLPQELLGTSCYEYFHQDDIGHLAECHRQVLQTREKITTNCYKFKIKDGSFITLRSRWFSFMNPWTKEVEYIVSTNTVVLANVLEGGDPTFPQLTASPHSMDSMLPSGEGGPKRTHPTVPGIPGGTRAGAGKIGRMIAEEVMEIHRIRGSSPSSCGSSPLNITSTPPPDASSPGGKKILNGGTPDIPSSGLPPGQAQENPGYPYSDSSSILGENPHIGIDMIDNDQGSSSPSNDEAAMAVIMSLLEADAGLGGPVDFSDLPWPL</sequence>